<gene>
    <name type="primary">sigD</name>
    <name type="ordered locus">MT3523</name>
</gene>
<name>RPSD_MYCTO</name>
<accession>P9WGG8</accession>
<accession>L0TFB3</accession>
<accession>P66811</accession>
<accession>Q50712</accession>
<sequence length="212" mass="22919">MVDPGVSPGCVRFVTLEISPSMTMQGERLDAVVAEAVAGDRNALREVLETIRPIVVRYCRARVGTVERSGLSADDVAQEVCLATITALPRYRDRGRPFLAFLYGIAAHKVADAHRAAGRDRAYPAETLPERWSADAGPEQMAIEADSVTRMNELLEILPAKQREILILRVVVGLSAEETAAAVGSTTGAVRVAQHRALQRLKDEIVAAGDYA</sequence>
<dbReference type="EMBL" id="AE000516">
    <property type="protein sequence ID" value="AAK47861.1"/>
    <property type="status" value="ALT_INIT"/>
    <property type="molecule type" value="Genomic_DNA"/>
</dbReference>
<dbReference type="PIR" id="C70737">
    <property type="entry name" value="C70737"/>
</dbReference>
<dbReference type="SMR" id="P9WGG8"/>
<dbReference type="KEGG" id="mtc:MT3523"/>
<dbReference type="PATRIC" id="fig|83331.31.peg.3780"/>
<dbReference type="HOGENOM" id="CLU_047691_10_1_11"/>
<dbReference type="Proteomes" id="UP000001020">
    <property type="component" value="Chromosome"/>
</dbReference>
<dbReference type="GO" id="GO:0003677">
    <property type="term" value="F:DNA binding"/>
    <property type="evidence" value="ECO:0007669"/>
    <property type="project" value="UniProtKB-KW"/>
</dbReference>
<dbReference type="GO" id="GO:0016987">
    <property type="term" value="F:sigma factor activity"/>
    <property type="evidence" value="ECO:0007669"/>
    <property type="project" value="UniProtKB-KW"/>
</dbReference>
<dbReference type="GO" id="GO:0006352">
    <property type="term" value="P:DNA-templated transcription initiation"/>
    <property type="evidence" value="ECO:0007669"/>
    <property type="project" value="InterPro"/>
</dbReference>
<dbReference type="GO" id="GO:0006950">
    <property type="term" value="P:response to stress"/>
    <property type="evidence" value="ECO:0007669"/>
    <property type="project" value="UniProtKB-ARBA"/>
</dbReference>
<dbReference type="CDD" id="cd06171">
    <property type="entry name" value="Sigma70_r4"/>
    <property type="match status" value="1"/>
</dbReference>
<dbReference type="FunFam" id="1.10.10.10:FF:000584">
    <property type="entry name" value="RNA polymerase sigma factor"/>
    <property type="match status" value="1"/>
</dbReference>
<dbReference type="FunFam" id="1.10.1740.10:FF:000022">
    <property type="entry name" value="RNA polymerase sigma factor"/>
    <property type="match status" value="1"/>
</dbReference>
<dbReference type="Gene3D" id="1.10.1740.10">
    <property type="match status" value="1"/>
</dbReference>
<dbReference type="Gene3D" id="1.10.10.10">
    <property type="entry name" value="Winged helix-like DNA-binding domain superfamily/Winged helix DNA-binding domain"/>
    <property type="match status" value="1"/>
</dbReference>
<dbReference type="InterPro" id="IPR039425">
    <property type="entry name" value="RNA_pol_sigma-70-like"/>
</dbReference>
<dbReference type="InterPro" id="IPR014284">
    <property type="entry name" value="RNA_pol_sigma-70_dom"/>
</dbReference>
<dbReference type="InterPro" id="IPR000838">
    <property type="entry name" value="RNA_pol_sigma70_ECF_CS"/>
</dbReference>
<dbReference type="InterPro" id="IPR007627">
    <property type="entry name" value="RNA_pol_sigma70_r2"/>
</dbReference>
<dbReference type="InterPro" id="IPR013249">
    <property type="entry name" value="RNA_pol_sigma70_r4_t2"/>
</dbReference>
<dbReference type="InterPro" id="IPR013325">
    <property type="entry name" value="RNA_pol_sigma_r2"/>
</dbReference>
<dbReference type="InterPro" id="IPR013324">
    <property type="entry name" value="RNA_pol_sigma_r3/r4-like"/>
</dbReference>
<dbReference type="InterPro" id="IPR036388">
    <property type="entry name" value="WH-like_DNA-bd_sf"/>
</dbReference>
<dbReference type="NCBIfam" id="NF007230">
    <property type="entry name" value="PRK09648.1"/>
    <property type="match status" value="1"/>
</dbReference>
<dbReference type="NCBIfam" id="TIGR02937">
    <property type="entry name" value="sigma70-ECF"/>
    <property type="match status" value="1"/>
</dbReference>
<dbReference type="PANTHER" id="PTHR43133:SF58">
    <property type="entry name" value="ECF RNA POLYMERASE SIGMA FACTOR SIGD"/>
    <property type="match status" value="1"/>
</dbReference>
<dbReference type="PANTHER" id="PTHR43133">
    <property type="entry name" value="RNA POLYMERASE ECF-TYPE SIGMA FACTO"/>
    <property type="match status" value="1"/>
</dbReference>
<dbReference type="Pfam" id="PF04542">
    <property type="entry name" value="Sigma70_r2"/>
    <property type="match status" value="1"/>
</dbReference>
<dbReference type="Pfam" id="PF08281">
    <property type="entry name" value="Sigma70_r4_2"/>
    <property type="match status" value="1"/>
</dbReference>
<dbReference type="SUPFAM" id="SSF88946">
    <property type="entry name" value="Sigma2 domain of RNA polymerase sigma factors"/>
    <property type="match status" value="1"/>
</dbReference>
<dbReference type="SUPFAM" id="SSF88659">
    <property type="entry name" value="Sigma3 and sigma4 domains of RNA polymerase sigma factors"/>
    <property type="match status" value="1"/>
</dbReference>
<dbReference type="PROSITE" id="PS01063">
    <property type="entry name" value="SIGMA70_ECF"/>
    <property type="match status" value="1"/>
</dbReference>
<evidence type="ECO:0000250" key="1"/>
<evidence type="ECO:0000255" key="2"/>
<evidence type="ECO:0000305" key="3"/>
<proteinExistence type="inferred from homology"/>
<comment type="function">
    <text evidence="1">Sigma factors are initiation factors that promote the attachment of RNA polymerase to specific initiation sites and are then released. Extracytoplasmic function (ECF) sigma factors are held in an inactive form by an anti-sigma factor until released by regulated intramembrane proteolysis (By similarity).</text>
</comment>
<comment type="subunit">
    <text evidence="1">Interacts transiently with the RNA polymerase catalytic core formed by RpoA, RpoB, RpoC and RpoZ (2 alpha, 1 beta, 1 beta' and 1 omega subunit) to form the RNA polymerase holoenzyme that can initiate transcription.</text>
</comment>
<comment type="domain">
    <text evidence="1">The sigma-70 factor domain-2 mediates sequence-specific interaction with the -10 element in promoter DNA, and plays an important role in melting the double-stranded DNA and the formation of the transcription bubble. The sigma-70 factor domain-2 mediates interaction with the RNA polymerase subunits RpoB and RpoC (By similarity).</text>
</comment>
<comment type="domain">
    <text evidence="1">The sigma-70 factor domain-4 contains a helix-turn-helix (H-T-H) motif that mediates interaction with the -35 element in promoter DNA. The domain also mediates interaction with the RNA polymerase subunit RpoA. Interactions between sigma-70 factor domain-4 and anti-sigma factors prevents interaction of sigma factors with the RNA polymerase catalytic core (By similarity).</text>
</comment>
<comment type="miscellaneous">
    <text evidence="1">Extracytoplasmic function sigma factors (ECF) are held in an inactive form by an anti-sigma factor until released by regulated intramembrane proteolysis (RIP). RIP occurs when an extracytoplasmic signal triggers a concerted proteolytic cascade to transmit information and elicit cellular responses. The membrane-spanning anti-sigma factor is first cut extracytoplasmically (site-1 protease, S1P), then within the membrane itself (site-2 protease, S2P), while cytoplasmic proteases finish degrading the regulatory protein, liberating SigD (By similarity).</text>
</comment>
<comment type="similarity">
    <text evidence="3">Belongs to the sigma-70 factor family. ECF subfamily.</text>
</comment>
<comment type="sequence caution" evidence="3">
    <conflict type="erroneous initiation">
        <sequence resource="EMBL-CDS" id="AAK47861"/>
    </conflict>
    <text>Extended N-terminus.</text>
</comment>
<protein>
    <recommendedName>
        <fullName>ECF RNA polymerase sigma factor SigD</fullName>
        <shortName>ECF sigma factor SigD</shortName>
    </recommendedName>
    <alternativeName>
        <fullName>Alternative RNA polymerase sigma factor SigD</fullName>
    </alternativeName>
    <alternativeName>
        <fullName>RNA polymerase sigma-D factor</fullName>
    </alternativeName>
    <alternativeName>
        <fullName>Sigma-D factor</fullName>
    </alternativeName>
</protein>
<reference key="1">
    <citation type="journal article" date="2002" name="J. Bacteriol.">
        <title>Whole-genome comparison of Mycobacterium tuberculosis clinical and laboratory strains.</title>
        <authorList>
            <person name="Fleischmann R.D."/>
            <person name="Alland D."/>
            <person name="Eisen J.A."/>
            <person name="Carpenter L."/>
            <person name="White O."/>
            <person name="Peterson J.D."/>
            <person name="DeBoy R.T."/>
            <person name="Dodson R.J."/>
            <person name="Gwinn M.L."/>
            <person name="Haft D.H."/>
            <person name="Hickey E.K."/>
            <person name="Kolonay J.F."/>
            <person name="Nelson W.C."/>
            <person name="Umayam L.A."/>
            <person name="Ermolaeva M.D."/>
            <person name="Salzberg S.L."/>
            <person name="Delcher A."/>
            <person name="Utterback T.R."/>
            <person name="Weidman J.F."/>
            <person name="Khouri H.M."/>
            <person name="Gill J."/>
            <person name="Mikula A."/>
            <person name="Bishai W."/>
            <person name="Jacobs W.R. Jr."/>
            <person name="Venter J.C."/>
            <person name="Fraser C.M."/>
        </authorList>
    </citation>
    <scope>NUCLEOTIDE SEQUENCE [LARGE SCALE GENOMIC DNA]</scope>
    <source>
        <strain>CDC 1551 / Oshkosh</strain>
    </source>
</reference>
<organism>
    <name type="scientific">Mycobacterium tuberculosis (strain CDC 1551 / Oshkosh)</name>
    <dbReference type="NCBI Taxonomy" id="83331"/>
    <lineage>
        <taxon>Bacteria</taxon>
        <taxon>Bacillati</taxon>
        <taxon>Actinomycetota</taxon>
        <taxon>Actinomycetes</taxon>
        <taxon>Mycobacteriales</taxon>
        <taxon>Mycobacteriaceae</taxon>
        <taxon>Mycobacterium</taxon>
        <taxon>Mycobacterium tuberculosis complex</taxon>
    </lineage>
</organism>
<feature type="chain" id="PRO_0000428364" description="ECF RNA polymerase sigma factor SigD">
    <location>
        <begin position="1"/>
        <end position="212"/>
    </location>
</feature>
<feature type="DNA-binding region" description="H-T-H motif" evidence="1">
    <location>
        <begin position="176"/>
        <end position="195"/>
    </location>
</feature>
<feature type="region of interest" description="Sigma-70 factor domain-2">
    <location>
        <begin position="49"/>
        <end position="119"/>
    </location>
</feature>
<feature type="region of interest" description="Sigma-70 factor domain-4">
    <location>
        <begin position="152"/>
        <end position="201"/>
    </location>
</feature>
<feature type="short sequence motif" description="Polymerase core binding" evidence="2">
    <location>
        <begin position="75"/>
        <end position="78"/>
    </location>
</feature>
<keyword id="KW-0238">DNA-binding</keyword>
<keyword id="KW-1185">Reference proteome</keyword>
<keyword id="KW-0731">Sigma factor</keyword>
<keyword id="KW-0804">Transcription</keyword>
<keyword id="KW-0805">Transcription regulation</keyword>
<keyword id="KW-0843">Virulence</keyword>